<evidence type="ECO:0000250" key="1">
    <source>
        <dbReference type="UniProtKB" id="P19253"/>
    </source>
</evidence>
<evidence type="ECO:0000250" key="2">
    <source>
        <dbReference type="UniProtKB" id="P40429"/>
    </source>
</evidence>
<evidence type="ECO:0000305" key="3"/>
<feature type="chain" id="PRO_0000133771" description="Large ribosomal subunit protein uL13">
    <location>
        <begin position="1" status="less than"/>
        <end position="137" status="greater than"/>
    </location>
</feature>
<feature type="modified residue" description="Citrulline" evidence="1">
    <location>
        <position position="55"/>
    </location>
</feature>
<feature type="modified residue" description="Phosphoserine" evidence="2">
    <location>
        <position position="73"/>
    </location>
</feature>
<feature type="modified residue" description="Citrulline" evidence="1">
    <location>
        <position position="136"/>
    </location>
</feature>
<feature type="sequence conflict" description="In Ref. 1; CAB03544." evidence="3" ref="1">
    <original>A</original>
    <variation>V</variation>
    <location>
        <position position="16"/>
    </location>
</feature>
<feature type="non-terminal residue">
    <location>
        <position position="1"/>
    </location>
</feature>
<feature type="non-terminal residue">
    <location>
        <position position="137"/>
    </location>
</feature>
<comment type="function">
    <text evidence="2">Associated with ribosomes but is not required for canonical ribosome function and has extra-ribosomal functions. Component of the GAIT (gamma interferon-activated inhibitor of translation) complex which mediates interferon-gamma-induced transcript-selective translation inhibition in inflammation processes. Upon interferon-gamma activation and subsequent phosphorylation dissociates from the ribosome and assembles into the GAIT complex which binds to stem loop-containing GAIT elements in the 3'-UTR of diverse inflammatory mRNAs (such as ceruplasmin) and suppresses their translation. In the GAIT complex interacts with m7G cap-bound eIF4G at or near the eIF3-binding site and blocks the recruitment of the 43S ribosomal complex. Involved in methylation of rRNA.</text>
</comment>
<comment type="subunit">
    <text evidence="2">Component of the 60S ribosome. Component of the GAIT complex. Interacts with EIF4G1.</text>
</comment>
<comment type="subcellular location">
    <subcellularLocation>
        <location evidence="2">Cytoplasm</location>
    </subcellularLocation>
</comment>
<comment type="PTM">
    <text evidence="1">Phosphorylation at Ser-73 upon interferon-gamma treatment in macrophages involves a DAPK1-DAPK3 kinase cascade and is causing release from the ribosome, association with the GAIT complex and subsequent involvement in transcript-selective translation inhibition.</text>
</comment>
<comment type="PTM">
    <text evidence="1">Citrullinated by PADI4.</text>
</comment>
<comment type="similarity">
    <text evidence="3">Belongs to the universal ribosomal protein uL13 family.</text>
</comment>
<sequence>QVLVLDGRGHLLGRLAAIVAKQVLLGRKVVVVRCEGINISGNFYRNKLKYLAFLRKRMNTNPSRGPYHFRAPSRIFWRTVRGMLPHKTKRGQAALDRLKVFDGIPPPYDKKKRMVVPAALKVVRLKLTGKFXYLGRL</sequence>
<keyword id="KW-0164">Citrullination</keyword>
<keyword id="KW-0963">Cytoplasm</keyword>
<keyword id="KW-0597">Phosphoprotein</keyword>
<keyword id="KW-1185">Reference proteome</keyword>
<keyword id="KW-0687">Ribonucleoprotein</keyword>
<keyword id="KW-0689">Ribosomal protein</keyword>
<keyword id="KW-0810">Translation regulation</keyword>
<dbReference type="EMBL" id="Z81152">
    <property type="protein sequence ID" value="CAB03544.1"/>
    <property type="molecule type" value="mRNA"/>
</dbReference>
<dbReference type="EMBL" id="Z84103">
    <property type="protein sequence ID" value="CAB06326.1"/>
    <property type="molecule type" value="mRNA"/>
</dbReference>
<dbReference type="FunCoup" id="Q95307">
    <property type="interactions" value="1653"/>
</dbReference>
<dbReference type="STRING" id="9823.ENSSSCP00000052582"/>
<dbReference type="PaxDb" id="9823-ENSSSCP00000003433"/>
<dbReference type="PeptideAtlas" id="Q95307"/>
<dbReference type="eggNOG" id="KOG3204">
    <property type="taxonomic scope" value="Eukaryota"/>
</dbReference>
<dbReference type="InParanoid" id="Q95307"/>
<dbReference type="Proteomes" id="UP000008227">
    <property type="component" value="Unplaced"/>
</dbReference>
<dbReference type="Proteomes" id="UP000314985">
    <property type="component" value="Unplaced"/>
</dbReference>
<dbReference type="Proteomes" id="UP000694570">
    <property type="component" value="Unplaced"/>
</dbReference>
<dbReference type="Proteomes" id="UP000694571">
    <property type="component" value="Unplaced"/>
</dbReference>
<dbReference type="Proteomes" id="UP000694720">
    <property type="component" value="Unplaced"/>
</dbReference>
<dbReference type="Proteomes" id="UP000694722">
    <property type="component" value="Unplaced"/>
</dbReference>
<dbReference type="Proteomes" id="UP000694723">
    <property type="component" value="Unplaced"/>
</dbReference>
<dbReference type="Proteomes" id="UP000694724">
    <property type="component" value="Unplaced"/>
</dbReference>
<dbReference type="Proteomes" id="UP000694725">
    <property type="component" value="Unplaced"/>
</dbReference>
<dbReference type="Proteomes" id="UP000694726">
    <property type="component" value="Unplaced"/>
</dbReference>
<dbReference type="Proteomes" id="UP000694727">
    <property type="component" value="Unplaced"/>
</dbReference>
<dbReference type="Proteomes" id="UP000694728">
    <property type="component" value="Unplaced"/>
</dbReference>
<dbReference type="GO" id="GO:0022625">
    <property type="term" value="C:cytosolic large ribosomal subunit"/>
    <property type="evidence" value="ECO:0000318"/>
    <property type="project" value="GO_Central"/>
</dbReference>
<dbReference type="GO" id="GO:0097452">
    <property type="term" value="C:GAIT complex"/>
    <property type="evidence" value="ECO:0000250"/>
    <property type="project" value="UniProtKB"/>
</dbReference>
<dbReference type="GO" id="GO:0005840">
    <property type="term" value="C:ribosome"/>
    <property type="evidence" value="ECO:0000318"/>
    <property type="project" value="GO_Central"/>
</dbReference>
<dbReference type="GO" id="GO:0003729">
    <property type="term" value="F:mRNA binding"/>
    <property type="evidence" value="ECO:0000318"/>
    <property type="project" value="GO_Central"/>
</dbReference>
<dbReference type="GO" id="GO:0003735">
    <property type="term" value="F:structural constituent of ribosome"/>
    <property type="evidence" value="ECO:0000318"/>
    <property type="project" value="GO_Central"/>
</dbReference>
<dbReference type="GO" id="GO:1901194">
    <property type="term" value="P:negative regulation of formation of translation preinitiation complex"/>
    <property type="evidence" value="ECO:0000250"/>
    <property type="project" value="UniProtKB"/>
</dbReference>
<dbReference type="GO" id="GO:0017148">
    <property type="term" value="P:negative regulation of translation"/>
    <property type="evidence" value="ECO:0000250"/>
    <property type="project" value="UniProtKB"/>
</dbReference>
<dbReference type="GO" id="GO:0006412">
    <property type="term" value="P:translation"/>
    <property type="evidence" value="ECO:0007669"/>
    <property type="project" value="InterPro"/>
</dbReference>
<dbReference type="CDD" id="cd00392">
    <property type="entry name" value="Ribosomal_L13"/>
    <property type="match status" value="1"/>
</dbReference>
<dbReference type="FunFam" id="3.90.1180.10:FF:000002">
    <property type="entry name" value="60S ribosomal protein L16"/>
    <property type="match status" value="1"/>
</dbReference>
<dbReference type="Gene3D" id="3.90.1180.10">
    <property type="entry name" value="Ribosomal protein L13"/>
    <property type="match status" value="1"/>
</dbReference>
<dbReference type="HAMAP" id="MF_01366">
    <property type="entry name" value="Ribosomal_uL13"/>
    <property type="match status" value="1"/>
</dbReference>
<dbReference type="InterPro" id="IPR005822">
    <property type="entry name" value="Ribosomal_uL13"/>
</dbReference>
<dbReference type="InterPro" id="IPR005823">
    <property type="entry name" value="Ribosomal_uL13_bac-type"/>
</dbReference>
<dbReference type="InterPro" id="IPR023563">
    <property type="entry name" value="Ribosomal_uL13_CS"/>
</dbReference>
<dbReference type="InterPro" id="IPR005755">
    <property type="entry name" value="Ribosomal_uL13_euk/arc"/>
</dbReference>
<dbReference type="InterPro" id="IPR036899">
    <property type="entry name" value="Ribosomal_uL13_sf"/>
</dbReference>
<dbReference type="NCBIfam" id="TIGR01077">
    <property type="entry name" value="L13_A_E"/>
    <property type="match status" value="1"/>
</dbReference>
<dbReference type="PANTHER" id="PTHR11545:SF3">
    <property type="entry name" value="LARGE RIBOSOMAL SUBUNIT PROTEIN UL13"/>
    <property type="match status" value="1"/>
</dbReference>
<dbReference type="PANTHER" id="PTHR11545">
    <property type="entry name" value="RIBOSOMAL PROTEIN L13"/>
    <property type="match status" value="1"/>
</dbReference>
<dbReference type="Pfam" id="PF00572">
    <property type="entry name" value="Ribosomal_L13"/>
    <property type="match status" value="1"/>
</dbReference>
<dbReference type="PIRSF" id="PIRSF002181">
    <property type="entry name" value="Ribosomal_L13"/>
    <property type="match status" value="1"/>
</dbReference>
<dbReference type="SUPFAM" id="SSF52161">
    <property type="entry name" value="Ribosomal protein L13"/>
    <property type="match status" value="1"/>
</dbReference>
<dbReference type="PROSITE" id="PS00783">
    <property type="entry name" value="RIBOSOMAL_L13"/>
    <property type="match status" value="1"/>
</dbReference>
<gene>
    <name type="primary">RPL13A</name>
</gene>
<proteinExistence type="evidence at transcript level"/>
<organism>
    <name type="scientific">Sus scrofa</name>
    <name type="common">Pig</name>
    <dbReference type="NCBI Taxonomy" id="9823"/>
    <lineage>
        <taxon>Eukaryota</taxon>
        <taxon>Metazoa</taxon>
        <taxon>Chordata</taxon>
        <taxon>Craniata</taxon>
        <taxon>Vertebrata</taxon>
        <taxon>Euteleostomi</taxon>
        <taxon>Mammalia</taxon>
        <taxon>Eutheria</taxon>
        <taxon>Laurasiatheria</taxon>
        <taxon>Artiodactyla</taxon>
        <taxon>Suina</taxon>
        <taxon>Suidae</taxon>
        <taxon>Sus</taxon>
    </lineage>
</organism>
<name>RL13A_PIG</name>
<protein>
    <recommendedName>
        <fullName evidence="3">Large ribosomal subunit protein uL13</fullName>
    </recommendedName>
    <alternativeName>
        <fullName>60S ribosomal protein L13a</fullName>
    </alternativeName>
</protein>
<accession>Q95307</accession>
<accession>P79320</accession>
<reference key="1">
    <citation type="submission" date="1997-01" db="EMBL/GenBank/DDBJ databases">
        <title>Evaluation and characterization of a porcine small intestine cDNA library.</title>
        <authorList>
            <person name="Winteroe A.K."/>
            <person name="Fredholm M."/>
        </authorList>
    </citation>
    <scope>NUCLEOTIDE SEQUENCE [LARGE SCALE MRNA]</scope>
    <source>
        <tissue>Small intestine</tissue>
    </source>
</reference>